<gene>
    <name type="primary">NAT10</name>
    <name type="ordered locus">At1g65550</name>
    <name type="ORF">F5I14.8</name>
</gene>
<comment type="subcellular location">
    <subcellularLocation>
        <location evidence="2">Membrane</location>
        <topology evidence="2">Multi-pass membrane protein</topology>
    </subcellularLocation>
</comment>
<comment type="similarity">
    <text evidence="2">Belongs to the nucleobase:cation symporter-2 (NCS2) (TC 2.A.40) family.</text>
</comment>
<comment type="sequence caution" evidence="2">
    <conflict type="erroneous gene model prediction">
        <sequence resource="EMBL-CDS" id="AAB60909"/>
    </conflict>
</comment>
<name>NAT10_ARATH</name>
<reference key="1">
    <citation type="journal article" date="2000" name="Nature">
        <title>Sequence and analysis of chromosome 1 of the plant Arabidopsis thaliana.</title>
        <authorList>
            <person name="Theologis A."/>
            <person name="Ecker J.R."/>
            <person name="Palm C.J."/>
            <person name="Federspiel N.A."/>
            <person name="Kaul S."/>
            <person name="White O."/>
            <person name="Alonso J."/>
            <person name="Altafi H."/>
            <person name="Araujo R."/>
            <person name="Bowman C.L."/>
            <person name="Brooks S.Y."/>
            <person name="Buehler E."/>
            <person name="Chan A."/>
            <person name="Chao Q."/>
            <person name="Chen H."/>
            <person name="Cheuk R.F."/>
            <person name="Chin C.W."/>
            <person name="Chung M.K."/>
            <person name="Conn L."/>
            <person name="Conway A.B."/>
            <person name="Conway A.R."/>
            <person name="Creasy T.H."/>
            <person name="Dewar K."/>
            <person name="Dunn P."/>
            <person name="Etgu P."/>
            <person name="Feldblyum T.V."/>
            <person name="Feng J.-D."/>
            <person name="Fong B."/>
            <person name="Fujii C.Y."/>
            <person name="Gill J.E."/>
            <person name="Goldsmith A.D."/>
            <person name="Haas B."/>
            <person name="Hansen N.F."/>
            <person name="Hughes B."/>
            <person name="Huizar L."/>
            <person name="Hunter J.L."/>
            <person name="Jenkins J."/>
            <person name="Johnson-Hopson C."/>
            <person name="Khan S."/>
            <person name="Khaykin E."/>
            <person name="Kim C.J."/>
            <person name="Koo H.L."/>
            <person name="Kremenetskaia I."/>
            <person name="Kurtz D.B."/>
            <person name="Kwan A."/>
            <person name="Lam B."/>
            <person name="Langin-Hooper S."/>
            <person name="Lee A."/>
            <person name="Lee J.M."/>
            <person name="Lenz C.A."/>
            <person name="Li J.H."/>
            <person name="Li Y.-P."/>
            <person name="Lin X."/>
            <person name="Liu S.X."/>
            <person name="Liu Z.A."/>
            <person name="Luros J.S."/>
            <person name="Maiti R."/>
            <person name="Marziali A."/>
            <person name="Militscher J."/>
            <person name="Miranda M."/>
            <person name="Nguyen M."/>
            <person name="Nierman W.C."/>
            <person name="Osborne B.I."/>
            <person name="Pai G."/>
            <person name="Peterson J."/>
            <person name="Pham P.K."/>
            <person name="Rizzo M."/>
            <person name="Rooney T."/>
            <person name="Rowley D."/>
            <person name="Sakano H."/>
            <person name="Salzberg S.L."/>
            <person name="Schwartz J.R."/>
            <person name="Shinn P."/>
            <person name="Southwick A.M."/>
            <person name="Sun H."/>
            <person name="Tallon L.J."/>
            <person name="Tambunga G."/>
            <person name="Toriumi M.J."/>
            <person name="Town C.D."/>
            <person name="Utterback T."/>
            <person name="Van Aken S."/>
            <person name="Vaysberg M."/>
            <person name="Vysotskaia V.S."/>
            <person name="Walker M."/>
            <person name="Wu D."/>
            <person name="Yu G."/>
            <person name="Fraser C.M."/>
            <person name="Venter J.C."/>
            <person name="Davis R.W."/>
        </authorList>
    </citation>
    <scope>NUCLEOTIDE SEQUENCE [LARGE SCALE GENOMIC DNA]</scope>
    <source>
        <strain>cv. Columbia</strain>
    </source>
</reference>
<reference key="2">
    <citation type="journal article" date="2017" name="Plant J.">
        <title>Araport11: a complete reannotation of the Arabidopsis thaliana reference genome.</title>
        <authorList>
            <person name="Cheng C.Y."/>
            <person name="Krishnakumar V."/>
            <person name="Chan A.P."/>
            <person name="Thibaud-Nissen F."/>
            <person name="Schobel S."/>
            <person name="Town C.D."/>
        </authorList>
    </citation>
    <scope>GENOME REANNOTATION</scope>
    <source>
        <strain>cv. Columbia</strain>
    </source>
</reference>
<reference key="3">
    <citation type="journal article" date="2006" name="Plant Cell Physiol.">
        <title>Identification and expression analysis of twelve members of the nucleobase-ascorbate transporter (NAT) gene family in Arabidopsis thaliana.</title>
        <authorList>
            <person name="Maurino V.G."/>
            <person name="Grube E."/>
            <person name="Zielinski J."/>
            <person name="Schild A."/>
            <person name="Fischer K."/>
            <person name="Flugge U.-I."/>
        </authorList>
    </citation>
    <scope>GENE FAMILY</scope>
</reference>
<dbReference type="EMBL" id="AC001229">
    <property type="protein sequence ID" value="AAB60909.1"/>
    <property type="status" value="ALT_SEQ"/>
    <property type="molecule type" value="Genomic_DNA"/>
</dbReference>
<dbReference type="EMBL" id="CP002684">
    <property type="protein sequence ID" value="AEE34395.1"/>
    <property type="molecule type" value="Genomic_DNA"/>
</dbReference>
<dbReference type="PIR" id="D96680">
    <property type="entry name" value="D96680"/>
</dbReference>
<dbReference type="RefSeq" id="NP_176733.2">
    <property type="nucleotide sequence ID" value="NM_105229.2"/>
</dbReference>
<dbReference type="SMR" id="O04472"/>
<dbReference type="FunCoup" id="O04472">
    <property type="interactions" value="529"/>
</dbReference>
<dbReference type="STRING" id="3702.O04472"/>
<dbReference type="PaxDb" id="3702-AT1G65550.1"/>
<dbReference type="EnsemblPlants" id="AT1G65550.1">
    <property type="protein sequence ID" value="AT1G65550.1"/>
    <property type="gene ID" value="AT1G65550"/>
</dbReference>
<dbReference type="GeneID" id="842866"/>
<dbReference type="Gramene" id="AT1G65550.1">
    <property type="protein sequence ID" value="AT1G65550.1"/>
    <property type="gene ID" value="AT1G65550"/>
</dbReference>
<dbReference type="KEGG" id="ath:AT1G65550"/>
<dbReference type="Araport" id="AT1G65550"/>
<dbReference type="TAIR" id="AT1G65550"/>
<dbReference type="eggNOG" id="KOG1292">
    <property type="taxonomic scope" value="Eukaryota"/>
</dbReference>
<dbReference type="HOGENOM" id="CLU_017959_5_3_1"/>
<dbReference type="InParanoid" id="O04472"/>
<dbReference type="OMA" id="WEKFSLY"/>
<dbReference type="PhylomeDB" id="O04472"/>
<dbReference type="PRO" id="PR:O04472"/>
<dbReference type="Proteomes" id="UP000006548">
    <property type="component" value="Chromosome 1"/>
</dbReference>
<dbReference type="ExpressionAtlas" id="O04472">
    <property type="expression patterns" value="baseline and differential"/>
</dbReference>
<dbReference type="GO" id="GO:0016020">
    <property type="term" value="C:membrane"/>
    <property type="evidence" value="ECO:0007669"/>
    <property type="project" value="UniProtKB-SubCell"/>
</dbReference>
<dbReference type="GO" id="GO:0022857">
    <property type="term" value="F:transmembrane transporter activity"/>
    <property type="evidence" value="ECO:0007669"/>
    <property type="project" value="InterPro"/>
</dbReference>
<dbReference type="InterPro" id="IPR006043">
    <property type="entry name" value="NCS2"/>
</dbReference>
<dbReference type="PANTHER" id="PTHR11119">
    <property type="entry name" value="XANTHINE-URACIL / VITAMIN C PERMEASE FAMILY MEMBER"/>
    <property type="match status" value="1"/>
</dbReference>
<dbReference type="Pfam" id="PF00860">
    <property type="entry name" value="Xan_ur_permease"/>
    <property type="match status" value="1"/>
</dbReference>
<accession>O04472</accession>
<feature type="chain" id="PRO_0000270167" description="Putative nucleobase-ascorbate transporter 10">
    <location>
        <begin position="1"/>
        <end position="541"/>
    </location>
</feature>
<feature type="transmembrane region" description="Helical" evidence="1">
    <location>
        <begin position="52"/>
        <end position="72"/>
    </location>
</feature>
<feature type="transmembrane region" description="Helical" evidence="1">
    <location>
        <begin position="79"/>
        <end position="99"/>
    </location>
</feature>
<feature type="transmembrane region" description="Helical" evidence="1">
    <location>
        <begin position="101"/>
        <end position="121"/>
    </location>
</feature>
<feature type="transmembrane region" description="Helical" evidence="1">
    <location>
        <begin position="141"/>
        <end position="161"/>
    </location>
</feature>
<feature type="transmembrane region" description="Helical" evidence="1">
    <location>
        <begin position="173"/>
        <end position="193"/>
    </location>
</feature>
<feature type="transmembrane region" description="Helical" evidence="1">
    <location>
        <begin position="196"/>
        <end position="216"/>
    </location>
</feature>
<feature type="transmembrane region" description="Helical" evidence="1">
    <location>
        <begin position="235"/>
        <end position="255"/>
    </location>
</feature>
<feature type="transmembrane region" description="Helical" evidence="1">
    <location>
        <begin position="299"/>
        <end position="319"/>
    </location>
</feature>
<feature type="transmembrane region" description="Helical" evidence="1">
    <location>
        <begin position="376"/>
        <end position="396"/>
    </location>
</feature>
<feature type="transmembrane region" description="Helical" evidence="1">
    <location>
        <begin position="397"/>
        <end position="417"/>
    </location>
</feature>
<feature type="transmembrane region" description="Helical" evidence="1">
    <location>
        <begin position="433"/>
        <end position="453"/>
    </location>
</feature>
<feature type="transmembrane region" description="Helical" evidence="1">
    <location>
        <begin position="476"/>
        <end position="496"/>
    </location>
</feature>
<sequence>MTNGGGGNNGAANRTEELQPHPVKEQLPGIQYCVNSPPPWLEAVVLGFQHYLLSLGITVLIPSVLVPLMGGGYAEKVKVIQTLLFVSGLTTLFQSFFGTRLPVIAVASYAYIIPITSIIYSTRFTYYTDPFERFVRTMRSIQGALIITGCFQVLICILGVWRNIVRFLSPLSIAPLATFTGLGLYHIGFPLLARCVEVGLPGLILLIFVTQYLPRFLKMKKGVMILDGSRCDRYGMILCIPLVWLFAQLLTSSGVYDHKSHTTQTSCRTDRTGLITNTPWIYIPYPFQWGSPTFDITDSFAMMAASFVTLFESTGLFYASARYGSATPIPPSVVSRGTCWLGVGVLLNGMLGGITGITTSTENVGLLAMTKIGSRRVIQISAAFMIFFSIFGKFGAFFASIPLPIMASLYCIVLCFVSSVGLSYLQFCNLNSFNIKFILGFSFFMAISIPQYFREYYNGGWRSDHHSNWLEDMIRVIFMSHTTVAAIIAIVLDCTLCRDSDEAKKDCGMKWWDKFRLYNLDVRNDEFYGLPCRLNKFFPSH</sequence>
<organism>
    <name type="scientific">Arabidopsis thaliana</name>
    <name type="common">Mouse-ear cress</name>
    <dbReference type="NCBI Taxonomy" id="3702"/>
    <lineage>
        <taxon>Eukaryota</taxon>
        <taxon>Viridiplantae</taxon>
        <taxon>Streptophyta</taxon>
        <taxon>Embryophyta</taxon>
        <taxon>Tracheophyta</taxon>
        <taxon>Spermatophyta</taxon>
        <taxon>Magnoliopsida</taxon>
        <taxon>eudicotyledons</taxon>
        <taxon>Gunneridae</taxon>
        <taxon>Pentapetalae</taxon>
        <taxon>rosids</taxon>
        <taxon>malvids</taxon>
        <taxon>Brassicales</taxon>
        <taxon>Brassicaceae</taxon>
        <taxon>Camelineae</taxon>
        <taxon>Arabidopsis</taxon>
    </lineage>
</organism>
<protein>
    <recommendedName>
        <fullName>Putative nucleobase-ascorbate transporter 10</fullName>
        <shortName>AtNAT10</shortName>
    </recommendedName>
</protein>
<evidence type="ECO:0000255" key="1"/>
<evidence type="ECO:0000305" key="2"/>
<keyword id="KW-0472">Membrane</keyword>
<keyword id="KW-1185">Reference proteome</keyword>
<keyword id="KW-0812">Transmembrane</keyword>
<keyword id="KW-1133">Transmembrane helix</keyword>
<keyword id="KW-0813">Transport</keyword>
<proteinExistence type="inferred from homology"/>